<organism>
    <name type="scientific">Mus musculus</name>
    <name type="common">Mouse</name>
    <dbReference type="NCBI Taxonomy" id="10090"/>
    <lineage>
        <taxon>Eukaryota</taxon>
        <taxon>Metazoa</taxon>
        <taxon>Chordata</taxon>
        <taxon>Craniata</taxon>
        <taxon>Vertebrata</taxon>
        <taxon>Euteleostomi</taxon>
        <taxon>Mammalia</taxon>
        <taxon>Eutheria</taxon>
        <taxon>Euarchontoglires</taxon>
        <taxon>Glires</taxon>
        <taxon>Rodentia</taxon>
        <taxon>Myomorpha</taxon>
        <taxon>Muroidea</taxon>
        <taxon>Muridae</taxon>
        <taxon>Murinae</taxon>
        <taxon>Mus</taxon>
        <taxon>Mus</taxon>
    </lineage>
</organism>
<comment type="function">
    <text evidence="5 7 8">Modulates the morphology of formed caveolae in cardiomyocytes, but is not required for caveolar formation. Facilitates the recruitment of MAPK1/3 to caveolae within cardiomyocytes and regulates alpha-1 adrenergic receptor-induced hypertrophic responses in cardiomyocytes through MAPK1/3 activation (PubMed:24567387). Contributes to proper membrane localization and stabilization of caveolin-3 (CAV3) in cardiomyocytes (PubMed:26497963). Induces RHOA activation and activates NPPA transcription and myofibrillar organization through the Rho/ROCK signaling pathway (PubMed:18332105).</text>
</comment>
<comment type="subunit">
    <text evidence="1 2 6">Component of the CAVIN complex composed of CAVIN1, CAVIN2, CAVIN3 and CAVIN4. Interacts with CAVIN1 (PubMed:19546242). Interacts with CAVIN2; this augments the transactivation of NPPA. Interacts with CAV3, ADRA1A, ADRA1B, MAPK1 and MAPK3 (By similarity).</text>
</comment>
<comment type="subcellular location">
    <subcellularLocation>
        <location evidence="5">Cytoplasm</location>
        <location evidence="5">Myofibril</location>
        <location evidence="5">Sarcomere</location>
    </subcellularLocation>
    <subcellularLocation>
        <location evidence="5">Cytoplasm</location>
    </subcellularLocation>
    <subcellularLocation>
        <location evidence="6">Cytoplasm</location>
        <location evidence="6">Cytosol</location>
    </subcellularLocation>
    <subcellularLocation>
        <location evidence="6 7">Membrane</location>
        <location evidence="6 7">Caveola</location>
    </subcellularLocation>
    <subcellularLocation>
        <location evidence="6">Cell membrane</location>
        <location evidence="6">Sarcolemma</location>
    </subcellularLocation>
    <subcellularLocation>
        <location evidence="8">Cell membrane</location>
    </subcellularLocation>
    <text evidence="5 6">In cardiomyocytes, accumulates in the Z-line of the sarcomere. In vascular smooth muscle cells, detected diffusely throughout the cytoplasm (PubMed:18332105). Localizes in the caveolae in a caveolin-dependent manner (PubMed:19546242).</text>
</comment>
<comment type="tissue specificity">
    <text evidence="5 6">Abundantly expressed in cardiac and skeletal muscle (at protein level). Weaker expression in aorta and lung. In heart, expressed in cardiomyocytes and vascular smooth muscle cells but not in other surrounding cells including vascular endothelial cells.</text>
</comment>
<comment type="developmental stage">
    <text evidence="5">Expression increases during development from embryo to adult.</text>
</comment>
<comment type="induction">
    <text evidence="5">Up-regulated in response to cardiac hypertrophy.</text>
</comment>
<comment type="domain">
    <text evidence="2">The coiled coil domain (residues 44-77) is essential for membrane-targeting in cardiomyocytes.</text>
</comment>
<comment type="disruption phenotype">
    <text evidence="7">Mice exhibit normal caveolar morphology and cardiac function under physiological conditions, whereas upon alpha-1 adrenergic receptor stimulation, show attenuation of cardiac hypertrophy accompanied by suppressed MAPK1/2 activation.</text>
</comment>
<comment type="similarity">
    <text evidence="9">Belongs to the CAVIN family.</text>
</comment>
<comment type="sequence caution" evidence="9">
    <conflict type="erroneous initiation">
        <sequence resource="EMBL-CDS" id="AAH89601"/>
    </conflict>
</comment>
<comment type="sequence caution" evidence="9">
    <conflict type="frameshift">
        <sequence resource="EMBL-CDS" id="BAB26442"/>
    </conflict>
</comment>
<dbReference type="EMBL" id="EU487254">
    <property type="protein sequence ID" value="ACA62936.1"/>
    <property type="molecule type" value="mRNA"/>
</dbReference>
<dbReference type="EMBL" id="AK009073">
    <property type="protein sequence ID" value="BAB26056.1"/>
    <property type="molecule type" value="mRNA"/>
</dbReference>
<dbReference type="EMBL" id="AK009691">
    <property type="protein sequence ID" value="BAB26442.1"/>
    <property type="status" value="ALT_FRAME"/>
    <property type="molecule type" value="mRNA"/>
</dbReference>
<dbReference type="EMBL" id="AL807771">
    <property type="status" value="NOT_ANNOTATED_CDS"/>
    <property type="molecule type" value="Genomic_DNA"/>
</dbReference>
<dbReference type="EMBL" id="CH466565">
    <property type="protein sequence ID" value="EDL02328.1"/>
    <property type="molecule type" value="Genomic_DNA"/>
</dbReference>
<dbReference type="EMBL" id="BC089601">
    <property type="protein sequence ID" value="AAH89601.1"/>
    <property type="status" value="ALT_INIT"/>
    <property type="molecule type" value="mRNA"/>
</dbReference>
<dbReference type="CCDS" id="CCDS18169.2"/>
<dbReference type="RefSeq" id="NP_080785.2">
    <property type="nucleotide sequence ID" value="NM_026509.4"/>
</dbReference>
<dbReference type="SMR" id="A2AMM0"/>
<dbReference type="BioGRID" id="212598">
    <property type="interactions" value="1"/>
</dbReference>
<dbReference type="FunCoup" id="A2AMM0">
    <property type="interactions" value="85"/>
</dbReference>
<dbReference type="IntAct" id="A2AMM0">
    <property type="interactions" value="1"/>
</dbReference>
<dbReference type="STRING" id="10090.ENSMUSP00000030033"/>
<dbReference type="GlyGen" id="A2AMM0">
    <property type="glycosylation" value="2 sites, 1 O-linked glycan (1 site)"/>
</dbReference>
<dbReference type="iPTMnet" id="A2AMM0"/>
<dbReference type="PhosphoSitePlus" id="A2AMM0"/>
<dbReference type="jPOST" id="A2AMM0"/>
<dbReference type="PaxDb" id="10090-ENSMUSP00000030033"/>
<dbReference type="PeptideAtlas" id="A2AMM0"/>
<dbReference type="ProteomicsDB" id="265278"/>
<dbReference type="Pumba" id="A2AMM0"/>
<dbReference type="Antibodypedia" id="14631">
    <property type="antibodies" value="81 antibodies from 16 providers"/>
</dbReference>
<dbReference type="DNASU" id="68016"/>
<dbReference type="Ensembl" id="ENSMUST00000030033.5">
    <property type="protein sequence ID" value="ENSMUSP00000030033.5"/>
    <property type="gene ID" value="ENSMUSG00000028348.8"/>
</dbReference>
<dbReference type="GeneID" id="68016"/>
<dbReference type="KEGG" id="mmu:68016"/>
<dbReference type="UCSC" id="uc012ddz.1">
    <property type="organism name" value="mouse"/>
</dbReference>
<dbReference type="AGR" id="MGI:1915266"/>
<dbReference type="CTD" id="347273"/>
<dbReference type="MGI" id="MGI:1915266">
    <property type="gene designation" value="Cavin4"/>
</dbReference>
<dbReference type="VEuPathDB" id="HostDB:ENSMUSG00000028348"/>
<dbReference type="eggNOG" id="ENOG502QQ9A">
    <property type="taxonomic scope" value="Eukaryota"/>
</dbReference>
<dbReference type="GeneTree" id="ENSGT00950000182910"/>
<dbReference type="HOGENOM" id="CLU_065589_1_0_1"/>
<dbReference type="InParanoid" id="A2AMM0"/>
<dbReference type="OMA" id="AFCPPDD"/>
<dbReference type="OrthoDB" id="8924144at2759"/>
<dbReference type="PhylomeDB" id="A2AMM0"/>
<dbReference type="TreeFam" id="TF331031"/>
<dbReference type="BioGRID-ORCS" id="68016">
    <property type="hits" value="0 hits in 78 CRISPR screens"/>
</dbReference>
<dbReference type="PRO" id="PR:A2AMM0"/>
<dbReference type="Proteomes" id="UP000000589">
    <property type="component" value="Chromosome 4"/>
</dbReference>
<dbReference type="RNAct" id="A2AMM0">
    <property type="molecule type" value="protein"/>
</dbReference>
<dbReference type="Bgee" id="ENSMUSG00000028348">
    <property type="expression patterns" value="Expressed in interventricular septum and 89 other cell types or tissues"/>
</dbReference>
<dbReference type="GO" id="GO:0005901">
    <property type="term" value="C:caveola"/>
    <property type="evidence" value="ECO:0000314"/>
    <property type="project" value="UniProtKB"/>
</dbReference>
<dbReference type="GO" id="GO:0005737">
    <property type="term" value="C:cytoplasm"/>
    <property type="evidence" value="ECO:0000266"/>
    <property type="project" value="MGI"/>
</dbReference>
<dbReference type="GO" id="GO:0005829">
    <property type="term" value="C:cytosol"/>
    <property type="evidence" value="ECO:0007669"/>
    <property type="project" value="UniProtKB-SubCell"/>
</dbReference>
<dbReference type="GO" id="GO:0005886">
    <property type="term" value="C:plasma membrane"/>
    <property type="evidence" value="ECO:0000314"/>
    <property type="project" value="UniProtKB"/>
</dbReference>
<dbReference type="GO" id="GO:0042383">
    <property type="term" value="C:sarcolemma"/>
    <property type="evidence" value="ECO:0007669"/>
    <property type="project" value="UniProtKB-SubCell"/>
</dbReference>
<dbReference type="GO" id="GO:0016528">
    <property type="term" value="C:sarcoplasm"/>
    <property type="evidence" value="ECO:0000314"/>
    <property type="project" value="MGI"/>
</dbReference>
<dbReference type="GO" id="GO:0030018">
    <property type="term" value="C:Z disc"/>
    <property type="evidence" value="ECO:0000314"/>
    <property type="project" value="MGI"/>
</dbReference>
<dbReference type="GO" id="GO:0005096">
    <property type="term" value="F:GTPase activator activity"/>
    <property type="evidence" value="ECO:0000266"/>
    <property type="project" value="MGI"/>
</dbReference>
<dbReference type="GO" id="GO:0055003">
    <property type="term" value="P:cardiac myofibril assembly"/>
    <property type="evidence" value="ECO:0000266"/>
    <property type="project" value="MGI"/>
</dbReference>
<dbReference type="GO" id="GO:0007517">
    <property type="term" value="P:muscle organ development"/>
    <property type="evidence" value="ECO:0007669"/>
    <property type="project" value="UniProtKB-KW"/>
</dbReference>
<dbReference type="GO" id="GO:0045944">
    <property type="term" value="P:positive regulation of transcription by RNA polymerase II"/>
    <property type="evidence" value="ECO:0000314"/>
    <property type="project" value="MGI"/>
</dbReference>
<dbReference type="GO" id="GO:0007266">
    <property type="term" value="P:Rho protein signal transduction"/>
    <property type="evidence" value="ECO:0000266"/>
    <property type="project" value="MGI"/>
</dbReference>
<dbReference type="InterPro" id="IPR026752">
    <property type="entry name" value="Cavin_fam"/>
</dbReference>
<dbReference type="PANTHER" id="PTHR15240:SF4">
    <property type="entry name" value="CAVEOLAE-ASSOCIATED PROTEIN 4"/>
    <property type="match status" value="1"/>
</dbReference>
<dbReference type="PANTHER" id="PTHR15240">
    <property type="entry name" value="CAVIN"/>
    <property type="match status" value="1"/>
</dbReference>
<dbReference type="Pfam" id="PF15237">
    <property type="entry name" value="PTRF_SDPR"/>
    <property type="match status" value="1"/>
</dbReference>
<accession>A2AMM0</accession>
<accession>B1PRL4</accession>
<accession>Q5FW67</accession>
<accession>Q9CV87</accession>
<accession>Q9D728</accession>
<feature type="chain" id="PRO_0000325764" description="Caveolae-associated protein 4">
    <location>
        <begin position="1"/>
        <end position="362"/>
    </location>
</feature>
<feature type="region of interest" description="Disordered" evidence="4">
    <location>
        <begin position="1"/>
        <end position="24"/>
    </location>
</feature>
<feature type="region of interest" description="Disordered" evidence="4">
    <location>
        <begin position="230"/>
        <end position="289"/>
    </location>
</feature>
<feature type="region of interest" description="Disordered" evidence="4">
    <location>
        <begin position="305"/>
        <end position="346"/>
    </location>
</feature>
<feature type="coiled-coil region" evidence="3">
    <location>
        <begin position="100"/>
        <end position="120"/>
    </location>
</feature>
<feature type="compositionally biased region" description="Basic and acidic residues" evidence="4">
    <location>
        <begin position="230"/>
        <end position="255"/>
    </location>
</feature>
<feature type="compositionally biased region" description="Basic and acidic residues" evidence="4">
    <location>
        <begin position="275"/>
        <end position="289"/>
    </location>
</feature>
<feature type="compositionally biased region" description="Basic and acidic residues" evidence="4">
    <location>
        <begin position="305"/>
        <end position="320"/>
    </location>
</feature>
<feature type="modified residue" description="Phosphoserine" evidence="1">
    <location>
        <position position="152"/>
    </location>
</feature>
<feature type="modified residue" description="Phosphoserine" evidence="1">
    <location>
        <position position="171"/>
    </location>
</feature>
<feature type="modified residue" description="Phosphoserine" evidence="1">
    <location>
        <position position="172"/>
    </location>
</feature>
<feature type="modified residue" description="Phosphotyrosine" evidence="10">
    <location>
        <position position="324"/>
    </location>
</feature>
<feature type="modified residue" description="Phosphothreonine" evidence="10">
    <location>
        <position position="334"/>
    </location>
</feature>
<feature type="modified residue" description="Phosphoserine" evidence="10">
    <location>
        <position position="353"/>
    </location>
</feature>
<feature type="sequence conflict" description="In Ref. 2; BAB26442." evidence="9" ref="2">
    <original>E</original>
    <variation>D</variation>
    <location>
        <position position="311"/>
    </location>
</feature>
<proteinExistence type="evidence at protein level"/>
<gene>
    <name type="primary">Cavin4</name>
    <name type="synonym">Murc</name>
</gene>
<evidence type="ECO:0000250" key="1">
    <source>
        <dbReference type="UniProtKB" id="B1PRL5"/>
    </source>
</evidence>
<evidence type="ECO:0000250" key="2">
    <source>
        <dbReference type="UniProtKB" id="Q5BKX8"/>
    </source>
</evidence>
<evidence type="ECO:0000255" key="3"/>
<evidence type="ECO:0000256" key="4">
    <source>
        <dbReference type="SAM" id="MobiDB-lite"/>
    </source>
</evidence>
<evidence type="ECO:0000269" key="5">
    <source>
    </source>
</evidence>
<evidence type="ECO:0000269" key="6">
    <source>
    </source>
</evidence>
<evidence type="ECO:0000269" key="7">
    <source>
    </source>
</evidence>
<evidence type="ECO:0000269" key="8">
    <source>
    </source>
</evidence>
<evidence type="ECO:0000305" key="9"/>
<evidence type="ECO:0007744" key="10">
    <source>
    </source>
</evidence>
<name>CAVN4_MOUSE</name>
<protein>
    <recommendedName>
        <fullName>Caveolae-associated protein 4</fullName>
    </recommendedName>
    <alternativeName>
        <fullName>Muscle-related coiled-coil protein</fullName>
    </alternativeName>
    <alternativeName>
        <fullName>Muscle-restricted coiled-coil protein</fullName>
    </alternativeName>
</protein>
<sequence length="362" mass="41008">MEHNGSASNAGKIHQNRLSSVTEDEDQDAALTIVTVLDRVASVVDSVQASQKRIEERHREMGNAIKSVQIDLLKLSQSHSNTGYVVNKLFEKTRKVSAHIKDVKARVEKQQVRVTKVETKQEEIMKKNKFRVVIFQEDIPCPASLSVVKDRSLPENQEEAEEVFDPPIELSSDEEYYVEESRSARLRKSGKEHIDHIKKAFSRENMQKTRQTLDKKVSGIRTRIVTPERRERLRQSGERLRQSGERLRQSGERFKKSISSAAPSKEAFKIRSLRKAKDPKAEGQEVDRGMGVDIISGSLALGPIHEFHSDEFSETEKEVTKGGYSPQEGGDPPTPEPLKVTFKPQVRVEDDESLLLELKQSS</sequence>
<reference key="1">
    <citation type="journal article" date="2008" name="Mol. Cell. Biol.">
        <title>MURC, a muscle-restricted coiled-coil protein that modulates the Rho/ROCK pathway, induces cardiac dysfunction and conduction disturbance.</title>
        <authorList>
            <person name="Ogata T."/>
            <person name="Ueyama T."/>
            <person name="Isodono K."/>
            <person name="Tagawa M."/>
            <person name="Takehara N."/>
            <person name="Kawashima T."/>
            <person name="Harada K."/>
            <person name="Takahashi T."/>
            <person name="Shioi T."/>
            <person name="Matsubara H."/>
            <person name="Oh H."/>
        </authorList>
    </citation>
    <scope>NUCLEOTIDE SEQUENCE [MRNA]</scope>
    <scope>FUNCTION</scope>
    <scope>SUBCELLULAR LOCATION</scope>
    <scope>TISSUE SPECIFICITY</scope>
    <scope>DEVELOPMENTAL STAGE</scope>
    <scope>INDUCTION</scope>
    <source>
        <strain>C57BL/6J</strain>
        <tissue>Heart</tissue>
    </source>
</reference>
<reference key="2">
    <citation type="journal article" date="2005" name="Science">
        <title>The transcriptional landscape of the mammalian genome.</title>
        <authorList>
            <person name="Carninci P."/>
            <person name="Kasukawa T."/>
            <person name="Katayama S."/>
            <person name="Gough J."/>
            <person name="Frith M.C."/>
            <person name="Maeda N."/>
            <person name="Oyama R."/>
            <person name="Ravasi T."/>
            <person name="Lenhard B."/>
            <person name="Wells C."/>
            <person name="Kodzius R."/>
            <person name="Shimokawa K."/>
            <person name="Bajic V.B."/>
            <person name="Brenner S.E."/>
            <person name="Batalov S."/>
            <person name="Forrest A.R."/>
            <person name="Zavolan M."/>
            <person name="Davis M.J."/>
            <person name="Wilming L.G."/>
            <person name="Aidinis V."/>
            <person name="Allen J.E."/>
            <person name="Ambesi-Impiombato A."/>
            <person name="Apweiler R."/>
            <person name="Aturaliya R.N."/>
            <person name="Bailey T.L."/>
            <person name="Bansal M."/>
            <person name="Baxter L."/>
            <person name="Beisel K.W."/>
            <person name="Bersano T."/>
            <person name="Bono H."/>
            <person name="Chalk A.M."/>
            <person name="Chiu K.P."/>
            <person name="Choudhary V."/>
            <person name="Christoffels A."/>
            <person name="Clutterbuck D.R."/>
            <person name="Crowe M.L."/>
            <person name="Dalla E."/>
            <person name="Dalrymple B.P."/>
            <person name="de Bono B."/>
            <person name="Della Gatta G."/>
            <person name="di Bernardo D."/>
            <person name="Down T."/>
            <person name="Engstrom P."/>
            <person name="Fagiolini M."/>
            <person name="Faulkner G."/>
            <person name="Fletcher C.F."/>
            <person name="Fukushima T."/>
            <person name="Furuno M."/>
            <person name="Futaki S."/>
            <person name="Gariboldi M."/>
            <person name="Georgii-Hemming P."/>
            <person name="Gingeras T.R."/>
            <person name="Gojobori T."/>
            <person name="Green R.E."/>
            <person name="Gustincich S."/>
            <person name="Harbers M."/>
            <person name="Hayashi Y."/>
            <person name="Hensch T.K."/>
            <person name="Hirokawa N."/>
            <person name="Hill D."/>
            <person name="Huminiecki L."/>
            <person name="Iacono M."/>
            <person name="Ikeo K."/>
            <person name="Iwama A."/>
            <person name="Ishikawa T."/>
            <person name="Jakt M."/>
            <person name="Kanapin A."/>
            <person name="Katoh M."/>
            <person name="Kawasawa Y."/>
            <person name="Kelso J."/>
            <person name="Kitamura H."/>
            <person name="Kitano H."/>
            <person name="Kollias G."/>
            <person name="Krishnan S.P."/>
            <person name="Kruger A."/>
            <person name="Kummerfeld S.K."/>
            <person name="Kurochkin I.V."/>
            <person name="Lareau L.F."/>
            <person name="Lazarevic D."/>
            <person name="Lipovich L."/>
            <person name="Liu J."/>
            <person name="Liuni S."/>
            <person name="McWilliam S."/>
            <person name="Madan Babu M."/>
            <person name="Madera M."/>
            <person name="Marchionni L."/>
            <person name="Matsuda H."/>
            <person name="Matsuzawa S."/>
            <person name="Miki H."/>
            <person name="Mignone F."/>
            <person name="Miyake S."/>
            <person name="Morris K."/>
            <person name="Mottagui-Tabar S."/>
            <person name="Mulder N."/>
            <person name="Nakano N."/>
            <person name="Nakauchi H."/>
            <person name="Ng P."/>
            <person name="Nilsson R."/>
            <person name="Nishiguchi S."/>
            <person name="Nishikawa S."/>
            <person name="Nori F."/>
            <person name="Ohara O."/>
            <person name="Okazaki Y."/>
            <person name="Orlando V."/>
            <person name="Pang K.C."/>
            <person name="Pavan W.J."/>
            <person name="Pavesi G."/>
            <person name="Pesole G."/>
            <person name="Petrovsky N."/>
            <person name="Piazza S."/>
            <person name="Reed J."/>
            <person name="Reid J.F."/>
            <person name="Ring B.Z."/>
            <person name="Ringwald M."/>
            <person name="Rost B."/>
            <person name="Ruan Y."/>
            <person name="Salzberg S.L."/>
            <person name="Sandelin A."/>
            <person name="Schneider C."/>
            <person name="Schoenbach C."/>
            <person name="Sekiguchi K."/>
            <person name="Semple C.A."/>
            <person name="Seno S."/>
            <person name="Sessa L."/>
            <person name="Sheng Y."/>
            <person name="Shibata Y."/>
            <person name="Shimada H."/>
            <person name="Shimada K."/>
            <person name="Silva D."/>
            <person name="Sinclair B."/>
            <person name="Sperling S."/>
            <person name="Stupka E."/>
            <person name="Sugiura K."/>
            <person name="Sultana R."/>
            <person name="Takenaka Y."/>
            <person name="Taki K."/>
            <person name="Tammoja K."/>
            <person name="Tan S.L."/>
            <person name="Tang S."/>
            <person name="Taylor M.S."/>
            <person name="Tegner J."/>
            <person name="Teichmann S.A."/>
            <person name="Ueda H.R."/>
            <person name="van Nimwegen E."/>
            <person name="Verardo R."/>
            <person name="Wei C.L."/>
            <person name="Yagi K."/>
            <person name="Yamanishi H."/>
            <person name="Zabarovsky E."/>
            <person name="Zhu S."/>
            <person name="Zimmer A."/>
            <person name="Hide W."/>
            <person name="Bult C."/>
            <person name="Grimmond S.M."/>
            <person name="Teasdale R.D."/>
            <person name="Liu E.T."/>
            <person name="Brusic V."/>
            <person name="Quackenbush J."/>
            <person name="Wahlestedt C."/>
            <person name="Mattick J.S."/>
            <person name="Hume D.A."/>
            <person name="Kai C."/>
            <person name="Sasaki D."/>
            <person name="Tomaru Y."/>
            <person name="Fukuda S."/>
            <person name="Kanamori-Katayama M."/>
            <person name="Suzuki M."/>
            <person name="Aoki J."/>
            <person name="Arakawa T."/>
            <person name="Iida J."/>
            <person name="Imamura K."/>
            <person name="Itoh M."/>
            <person name="Kato T."/>
            <person name="Kawaji H."/>
            <person name="Kawagashira N."/>
            <person name="Kawashima T."/>
            <person name="Kojima M."/>
            <person name="Kondo S."/>
            <person name="Konno H."/>
            <person name="Nakano K."/>
            <person name="Ninomiya N."/>
            <person name="Nishio T."/>
            <person name="Okada M."/>
            <person name="Plessy C."/>
            <person name="Shibata K."/>
            <person name="Shiraki T."/>
            <person name="Suzuki S."/>
            <person name="Tagami M."/>
            <person name="Waki K."/>
            <person name="Watahiki A."/>
            <person name="Okamura-Oho Y."/>
            <person name="Suzuki H."/>
            <person name="Kawai J."/>
            <person name="Hayashizaki Y."/>
        </authorList>
    </citation>
    <scope>NUCLEOTIDE SEQUENCE [LARGE SCALE MRNA]</scope>
    <source>
        <strain>C57BL/6J</strain>
        <tissue>Tongue</tissue>
    </source>
</reference>
<reference key="3">
    <citation type="journal article" date="2009" name="PLoS Biol.">
        <title>Lineage-specific biology revealed by a finished genome assembly of the mouse.</title>
        <authorList>
            <person name="Church D.M."/>
            <person name="Goodstadt L."/>
            <person name="Hillier L.W."/>
            <person name="Zody M.C."/>
            <person name="Goldstein S."/>
            <person name="She X."/>
            <person name="Bult C.J."/>
            <person name="Agarwala R."/>
            <person name="Cherry J.L."/>
            <person name="DiCuccio M."/>
            <person name="Hlavina W."/>
            <person name="Kapustin Y."/>
            <person name="Meric P."/>
            <person name="Maglott D."/>
            <person name="Birtle Z."/>
            <person name="Marques A.C."/>
            <person name="Graves T."/>
            <person name="Zhou S."/>
            <person name="Teague B."/>
            <person name="Potamousis K."/>
            <person name="Churas C."/>
            <person name="Place M."/>
            <person name="Herschleb J."/>
            <person name="Runnheim R."/>
            <person name="Forrest D."/>
            <person name="Amos-Landgraf J."/>
            <person name="Schwartz D.C."/>
            <person name="Cheng Z."/>
            <person name="Lindblad-Toh K."/>
            <person name="Eichler E.E."/>
            <person name="Ponting C.P."/>
        </authorList>
    </citation>
    <scope>NUCLEOTIDE SEQUENCE [LARGE SCALE GENOMIC DNA]</scope>
    <source>
        <strain>C57BL/6J</strain>
    </source>
</reference>
<reference key="4">
    <citation type="submission" date="2005-09" db="EMBL/GenBank/DDBJ databases">
        <authorList>
            <person name="Mural R.J."/>
            <person name="Adams M.D."/>
            <person name="Myers E.W."/>
            <person name="Smith H.O."/>
            <person name="Venter J.C."/>
        </authorList>
    </citation>
    <scope>NUCLEOTIDE SEQUENCE [LARGE SCALE GENOMIC DNA]</scope>
</reference>
<reference key="5">
    <citation type="journal article" date="2004" name="Genome Res.">
        <title>The status, quality, and expansion of the NIH full-length cDNA project: the Mammalian Gene Collection (MGC).</title>
        <authorList>
            <consortium name="The MGC Project Team"/>
        </authorList>
    </citation>
    <scope>NUCLEOTIDE SEQUENCE [LARGE SCALE MRNA]</scope>
    <source>
        <tissue>Heart</tissue>
    </source>
</reference>
<reference key="6">
    <citation type="journal article" date="2009" name="J. Cell Biol.">
        <title>MURC/Cavin-4 and cavin family members form tissue-specific caveolar complexes.</title>
        <authorList>
            <person name="Bastiani M."/>
            <person name="Liu L."/>
            <person name="Hill M.M."/>
            <person name="Jedrychowski M.P."/>
            <person name="Nixon S.J."/>
            <person name="Lo H.P."/>
            <person name="Abankwa D."/>
            <person name="Luetterforst R."/>
            <person name="Fernandez-Rojo M."/>
            <person name="Breen M.R."/>
            <person name="Gygi S.P."/>
            <person name="Vinten J."/>
            <person name="Walser P.J."/>
            <person name="North K.N."/>
            <person name="Hancock J.F."/>
            <person name="Pilch P.F."/>
            <person name="Parton R.G."/>
        </authorList>
    </citation>
    <scope>IDENTIFICATION IN THE CAVIN COMPLEX</scope>
    <scope>INTERACTION WITH CAVIN1</scope>
    <scope>TISSUE SPECIFICITY</scope>
    <scope>SUBCELLULAR LOCATION</scope>
</reference>
<reference key="7">
    <citation type="journal article" date="2010" name="Cell">
        <title>A tissue-specific atlas of mouse protein phosphorylation and expression.</title>
        <authorList>
            <person name="Huttlin E.L."/>
            <person name="Jedrychowski M.P."/>
            <person name="Elias J.E."/>
            <person name="Goswami T."/>
            <person name="Rad R."/>
            <person name="Beausoleil S.A."/>
            <person name="Villen J."/>
            <person name="Haas W."/>
            <person name="Sowa M.E."/>
            <person name="Gygi S.P."/>
        </authorList>
    </citation>
    <scope>PHOSPHORYLATION [LARGE SCALE ANALYSIS] AT TYR-324; THR-334 AND SER-353</scope>
    <scope>IDENTIFICATION BY MASS SPECTROMETRY [LARGE SCALE ANALYSIS]</scope>
    <source>
        <tissue>Brown adipose tissue</tissue>
        <tissue>Heart</tissue>
        <tissue>Lung</tissue>
    </source>
</reference>
<reference key="8">
    <citation type="journal article" date="2014" name="Proc. Natl. Acad. Sci. U.S.A.">
        <title>MURC/Cavin-4 facilitates recruitment of ERK to caveolae and concentric cardiac hypertrophy induced by alpha1-adrenergic receptors.</title>
        <authorList>
            <person name="Ogata T."/>
            <person name="Naito D."/>
            <person name="Nakanishi N."/>
            <person name="Hayashi Y.K."/>
            <person name="Taniguchi T."/>
            <person name="Miyagawa K."/>
            <person name="Hamaoka T."/>
            <person name="Maruyama N."/>
            <person name="Matoba S."/>
            <person name="Ikeda K."/>
            <person name="Yamada H."/>
            <person name="Oh H."/>
            <person name="Ueyama T."/>
        </authorList>
    </citation>
    <scope>FUNCTION</scope>
    <scope>SUBCELLULAR LOCATION</scope>
    <scope>DISRUPTION PHENOTYPE</scope>
</reference>
<reference key="9">
    <citation type="journal article" date="2015" name="Am. J. Physiol.">
        <title>The coiled-coil domain of MURC/cavin-4 is involved in membrane trafficking of caveolin-3 in cardiomyocytes.</title>
        <authorList>
            <person name="Naito D."/>
            <person name="Ogata T."/>
            <person name="Hamaoka T."/>
            <person name="Nakanishi N."/>
            <person name="Miyagawa K."/>
            <person name="Maruyama N."/>
            <person name="Kasahara T."/>
            <person name="Taniguchi T."/>
            <person name="Nishi M."/>
            <person name="Matoba S."/>
            <person name="Ueyama T."/>
        </authorList>
    </citation>
    <scope>FUNCTION</scope>
    <scope>SUBCELLULAR LOCATION</scope>
</reference>
<keyword id="KW-0010">Activator</keyword>
<keyword id="KW-1003">Cell membrane</keyword>
<keyword id="KW-0175">Coiled coil</keyword>
<keyword id="KW-0963">Cytoplasm</keyword>
<keyword id="KW-0217">Developmental protein</keyword>
<keyword id="KW-0221">Differentiation</keyword>
<keyword id="KW-0472">Membrane</keyword>
<keyword id="KW-0517">Myogenesis</keyword>
<keyword id="KW-0597">Phosphoprotein</keyword>
<keyword id="KW-1185">Reference proteome</keyword>
<keyword id="KW-0804">Transcription</keyword>
<keyword id="KW-0805">Transcription regulation</keyword>